<feature type="chain" id="PRO_0000065914" description="Protein VraC">
    <location>
        <begin position="1"/>
        <end position="121"/>
    </location>
</feature>
<proteinExistence type="predicted"/>
<name>VRAC_STAAS</name>
<reference key="1">
    <citation type="journal article" date="2004" name="Proc. Natl. Acad. Sci. U.S.A.">
        <title>Complete genomes of two clinical Staphylococcus aureus strains: evidence for the rapid evolution of virulence and drug resistance.</title>
        <authorList>
            <person name="Holden M.T.G."/>
            <person name="Feil E.J."/>
            <person name="Lindsay J.A."/>
            <person name="Peacock S.J."/>
            <person name="Day N.P.J."/>
            <person name="Enright M.C."/>
            <person name="Foster T.J."/>
            <person name="Moore C.E."/>
            <person name="Hurst L."/>
            <person name="Atkin R."/>
            <person name="Barron A."/>
            <person name="Bason N."/>
            <person name="Bentley S.D."/>
            <person name="Chillingworth C."/>
            <person name="Chillingworth T."/>
            <person name="Churcher C."/>
            <person name="Clark L."/>
            <person name="Corton C."/>
            <person name="Cronin A."/>
            <person name="Doggett J."/>
            <person name="Dowd L."/>
            <person name="Feltwell T."/>
            <person name="Hance Z."/>
            <person name="Harris B."/>
            <person name="Hauser H."/>
            <person name="Holroyd S."/>
            <person name="Jagels K."/>
            <person name="James K.D."/>
            <person name="Lennard N."/>
            <person name="Line A."/>
            <person name="Mayes R."/>
            <person name="Moule S."/>
            <person name="Mungall K."/>
            <person name="Ormond D."/>
            <person name="Quail M.A."/>
            <person name="Rabbinowitsch E."/>
            <person name="Rutherford K.M."/>
            <person name="Sanders M."/>
            <person name="Sharp S."/>
            <person name="Simmonds M."/>
            <person name="Stevens K."/>
            <person name="Whitehead S."/>
            <person name="Barrell B.G."/>
            <person name="Spratt B.G."/>
            <person name="Parkhill J."/>
        </authorList>
    </citation>
    <scope>NUCLEOTIDE SEQUENCE [LARGE SCALE GENOMIC DNA]</scope>
    <source>
        <strain>MSSA476</strain>
    </source>
</reference>
<organism>
    <name type="scientific">Staphylococcus aureus (strain MSSA476)</name>
    <dbReference type="NCBI Taxonomy" id="282459"/>
    <lineage>
        <taxon>Bacteria</taxon>
        <taxon>Bacillati</taxon>
        <taxon>Bacillota</taxon>
        <taxon>Bacilli</taxon>
        <taxon>Bacillales</taxon>
        <taxon>Staphylococcaceae</taxon>
        <taxon>Staphylococcus</taxon>
    </lineage>
</organism>
<sequence>MQHYLLDSNQRLNVSFSKDSVAAYYQCFNQPYRKEVPPLMCASLWPKFDLFKKYANSELILTKSAINQTQKIEVDTIYVGHLEDIECRQTRNITRYTMALTLTKNDQHVITVTQTFIKAMK</sequence>
<protein>
    <recommendedName>
        <fullName>Protein VraC</fullName>
    </recommendedName>
</protein>
<accession>Q6GBR0</accession>
<gene>
    <name type="primary">vraC</name>
    <name type="ordered locus">SAS0535</name>
</gene>
<dbReference type="EMBL" id="BX571857">
    <property type="protein sequence ID" value="CAG42310.1"/>
    <property type="molecule type" value="Genomic_DNA"/>
</dbReference>
<dbReference type="RefSeq" id="WP_001165058.1">
    <property type="nucleotide sequence ID" value="NC_002953.3"/>
</dbReference>
<dbReference type="SMR" id="Q6GBR0"/>
<dbReference type="KEGG" id="sas:SAS0535"/>
<dbReference type="HOGENOM" id="CLU_2195295_0_0_9"/>
<dbReference type="InterPro" id="IPR016994">
    <property type="entry name" value="UCP032370_VraC"/>
</dbReference>
<dbReference type="PIRSF" id="PIRSF032370">
    <property type="entry name" value="UCP032370_VraC"/>
    <property type="match status" value="1"/>
</dbReference>